<keyword id="KW-0002">3D-structure</keyword>
<keyword id="KW-0025">Alternative splicing</keyword>
<keyword id="KW-0027">Amidation</keyword>
<keyword id="KW-0165">Cleavage on pair of basic residues</keyword>
<keyword id="KW-0903">Direct protein sequencing</keyword>
<keyword id="KW-0582">Pharmaceutical</keyword>
<keyword id="KW-1267">Proteomics identification</keyword>
<keyword id="KW-1185">Reference proteome</keyword>
<keyword id="KW-0964">Secreted</keyword>
<keyword id="KW-0732">Signal</keyword>
<accession>P01286</accession>
<accession>Q4KN10</accession>
<accession>Q5JYR1</accession>
<organism>
    <name type="scientific">Homo sapiens</name>
    <name type="common">Human</name>
    <dbReference type="NCBI Taxonomy" id="9606"/>
    <lineage>
        <taxon>Eukaryota</taxon>
        <taxon>Metazoa</taxon>
        <taxon>Chordata</taxon>
        <taxon>Craniata</taxon>
        <taxon>Vertebrata</taxon>
        <taxon>Euteleostomi</taxon>
        <taxon>Mammalia</taxon>
        <taxon>Eutheria</taxon>
        <taxon>Euarchontoglires</taxon>
        <taxon>Primates</taxon>
        <taxon>Haplorrhini</taxon>
        <taxon>Catarrhini</taxon>
        <taxon>Hominidae</taxon>
        <taxon>Homo</taxon>
    </lineage>
</organism>
<gene>
    <name type="primary">GHRH</name>
    <name type="synonym">GHRF</name>
</gene>
<reference key="1">
    <citation type="journal article" date="1983" name="Proc. Natl. Acad. Sci. U.S.A.">
        <title>Cloning and sequence analysis of cDNA for the precursor of human growth hormone-releasing factor, somatocrinin.</title>
        <authorList>
            <person name="Gubler U."/>
            <person name="Monahan J.J."/>
            <person name="Lomedico P.T."/>
            <person name="Bhatt R.S."/>
            <person name="Collier K.J."/>
            <person name="Hoffman B.J."/>
            <person name="Boehlen P."/>
            <person name="Esch F."/>
            <person name="Ling N."/>
            <person name="Zeytin F."/>
            <person name="Brazeau P."/>
            <person name="Poonian M.S."/>
            <person name="Gage L.P."/>
        </authorList>
    </citation>
    <scope>NUCLEOTIDE SEQUENCE [MRNA] (ISOFORMS 1 AND 2)</scope>
</reference>
<reference key="2">
    <citation type="journal article" date="1985" name="Proc. Natl. Acad. Sci. U.S.A.">
        <title>Gene encoding human growth hormone-releasing factor precursor: structure, sequence, and chromosomal assignment.</title>
        <authorList>
            <person name="Mayo K.E."/>
            <person name="Cerelli G.M."/>
            <person name="Lebo R.V."/>
            <person name="Bruce B.D."/>
            <person name="Rosenfeld M.G."/>
            <person name="Evans R.M."/>
        </authorList>
    </citation>
    <scope>NUCLEOTIDE SEQUENCE [GENOMIC DNA]</scope>
</reference>
<reference key="3">
    <citation type="journal article" date="2001" name="Nature">
        <title>The DNA sequence and comparative analysis of human chromosome 20.</title>
        <authorList>
            <person name="Deloukas P."/>
            <person name="Matthews L.H."/>
            <person name="Ashurst J.L."/>
            <person name="Burton J."/>
            <person name="Gilbert J.G.R."/>
            <person name="Jones M."/>
            <person name="Stavrides G."/>
            <person name="Almeida J.P."/>
            <person name="Babbage A.K."/>
            <person name="Bagguley C.L."/>
            <person name="Bailey J."/>
            <person name="Barlow K.F."/>
            <person name="Bates K.N."/>
            <person name="Beard L.M."/>
            <person name="Beare D.M."/>
            <person name="Beasley O.P."/>
            <person name="Bird C.P."/>
            <person name="Blakey S.E."/>
            <person name="Bridgeman A.M."/>
            <person name="Brown A.J."/>
            <person name="Buck D."/>
            <person name="Burrill W.D."/>
            <person name="Butler A.P."/>
            <person name="Carder C."/>
            <person name="Carter N.P."/>
            <person name="Chapman J.C."/>
            <person name="Clamp M."/>
            <person name="Clark G."/>
            <person name="Clark L.N."/>
            <person name="Clark S.Y."/>
            <person name="Clee C.M."/>
            <person name="Clegg S."/>
            <person name="Cobley V.E."/>
            <person name="Collier R.E."/>
            <person name="Connor R.E."/>
            <person name="Corby N.R."/>
            <person name="Coulson A."/>
            <person name="Coville G.J."/>
            <person name="Deadman R."/>
            <person name="Dhami P.D."/>
            <person name="Dunn M."/>
            <person name="Ellington A.G."/>
            <person name="Frankland J.A."/>
            <person name="Fraser A."/>
            <person name="French L."/>
            <person name="Garner P."/>
            <person name="Grafham D.V."/>
            <person name="Griffiths C."/>
            <person name="Griffiths M.N.D."/>
            <person name="Gwilliam R."/>
            <person name="Hall R.E."/>
            <person name="Hammond S."/>
            <person name="Harley J.L."/>
            <person name="Heath P.D."/>
            <person name="Ho S."/>
            <person name="Holden J.L."/>
            <person name="Howden P.J."/>
            <person name="Huckle E."/>
            <person name="Hunt A.R."/>
            <person name="Hunt S.E."/>
            <person name="Jekosch K."/>
            <person name="Johnson C.M."/>
            <person name="Johnson D."/>
            <person name="Kay M.P."/>
            <person name="Kimberley A.M."/>
            <person name="King A."/>
            <person name="Knights A."/>
            <person name="Laird G.K."/>
            <person name="Lawlor S."/>
            <person name="Lehvaeslaiho M.H."/>
            <person name="Leversha M.A."/>
            <person name="Lloyd C."/>
            <person name="Lloyd D.M."/>
            <person name="Lovell J.D."/>
            <person name="Marsh V.L."/>
            <person name="Martin S.L."/>
            <person name="McConnachie L.J."/>
            <person name="McLay K."/>
            <person name="McMurray A.A."/>
            <person name="Milne S.A."/>
            <person name="Mistry D."/>
            <person name="Moore M.J.F."/>
            <person name="Mullikin J.C."/>
            <person name="Nickerson T."/>
            <person name="Oliver K."/>
            <person name="Parker A."/>
            <person name="Patel R."/>
            <person name="Pearce T.A.V."/>
            <person name="Peck A.I."/>
            <person name="Phillimore B.J.C.T."/>
            <person name="Prathalingam S.R."/>
            <person name="Plumb R.W."/>
            <person name="Ramsay H."/>
            <person name="Rice C.M."/>
            <person name="Ross M.T."/>
            <person name="Scott C.E."/>
            <person name="Sehra H.K."/>
            <person name="Shownkeen R."/>
            <person name="Sims S."/>
            <person name="Skuce C.D."/>
            <person name="Smith M.L."/>
            <person name="Soderlund C."/>
            <person name="Steward C.A."/>
            <person name="Sulston J.E."/>
            <person name="Swann R.M."/>
            <person name="Sycamore N."/>
            <person name="Taylor R."/>
            <person name="Tee L."/>
            <person name="Thomas D.W."/>
            <person name="Thorpe A."/>
            <person name="Tracey A."/>
            <person name="Tromans A.C."/>
            <person name="Vaudin M."/>
            <person name="Wall M."/>
            <person name="Wallis J.M."/>
            <person name="Whitehead S.L."/>
            <person name="Whittaker P."/>
            <person name="Willey D.L."/>
            <person name="Williams L."/>
            <person name="Williams S.A."/>
            <person name="Wilming L."/>
            <person name="Wray P.W."/>
            <person name="Hubbard T."/>
            <person name="Durbin R.M."/>
            <person name="Bentley D.R."/>
            <person name="Beck S."/>
            <person name="Rogers J."/>
        </authorList>
    </citation>
    <scope>NUCLEOTIDE SEQUENCE [LARGE SCALE GENOMIC DNA]</scope>
</reference>
<reference key="4">
    <citation type="journal article" date="2004" name="Genome Res.">
        <title>The status, quality, and expansion of the NIH full-length cDNA project: the Mammalian Gene Collection (MGC).</title>
        <authorList>
            <consortium name="The MGC Project Team"/>
        </authorList>
    </citation>
    <scope>NUCLEOTIDE SEQUENCE [LARGE SCALE MRNA] (ISOFORMS 1 AND 2)</scope>
</reference>
<reference key="5">
    <citation type="journal article" date="1983" name="Nature">
        <title>Expression-cloning and sequence of a cDNA encoding human growth hormone-releasing factor.</title>
        <authorList>
            <person name="Mayo K.E."/>
            <person name="Vale W."/>
            <person name="Rivier J."/>
            <person name="Rosenfeld M.G."/>
            <person name="Evans R.M."/>
        </authorList>
    </citation>
    <scope>NUCLEOTIDE SEQUENCE [MRNA] OF 6-101</scope>
</reference>
<reference key="6">
    <citation type="journal article" date="1982" name="Science">
        <title>Growth hormone-releasing factor from a human pancreatic tumor that caused acromegaly.</title>
        <authorList>
            <person name="Guillemin R."/>
            <person name="Brazeau P."/>
            <person name="Boehlen P."/>
            <person name="Esch F."/>
            <person name="Ling N."/>
            <person name="Wehrenberg W.B."/>
        </authorList>
    </citation>
    <scope>PROTEIN SEQUENCE OF 32-75</scope>
    <scope>AMIDATION AT LEU-75</scope>
</reference>
<reference key="7">
    <citation type="journal article" date="2013" name="Endocrinology">
        <title>Comparative inhibition of the GH/IGF-I axis obtained with either the targeted secretion inhibitor SXN101959 or the somatostatin analog octreotide in growing male rats.</title>
        <authorList>
            <person name="Somm E."/>
            <person name="Bonnet N."/>
            <person name="Zizzari P."/>
            <person name="Tolle V."/>
            <person name="Toulotte A."/>
            <person name="Jones R."/>
            <person name="Epelbaum J."/>
            <person name="Martinez A."/>
            <person name="Hueppi P.S."/>
            <person name="Aubert M.L."/>
        </authorList>
    </citation>
    <scope>BIOTECHNOLOGY</scope>
</reference>
<reference key="8">
    <citation type="journal article" date="2015" name="Proteomics">
        <title>N-terminome analysis of the human mitochondrial proteome.</title>
        <authorList>
            <person name="Vaca Jacome A.S."/>
            <person name="Rabilloud T."/>
            <person name="Schaeffer-Reiss C."/>
            <person name="Rompais M."/>
            <person name="Ayoub D."/>
            <person name="Lane L."/>
            <person name="Bairoch A."/>
            <person name="Van Dorsselaer A."/>
            <person name="Carapito C."/>
        </authorList>
    </citation>
    <scope>IDENTIFICATION BY MASS SPECTROMETRY [LARGE SCALE ANALYSIS]</scope>
</reference>
<reference key="9">
    <citation type="journal article" date="1987" name="Protein Eng.">
        <title>Solution conformations of human growth hormone releasing factor: comparison of the restrained molecular dynamics and distance geometry methods for a system without long-range distance data.</title>
        <authorList>
            <person name="Bruenger A.T."/>
            <person name="Clore G.M."/>
            <person name="Gronenborn A.M."/>
            <person name="Karplus M."/>
        </authorList>
    </citation>
    <scope>STRUCTURE BY NMR OF 32-60</scope>
</reference>
<reference key="10">
    <citation type="journal article" date="1986" name="J. Mol. Biol.">
        <title>Solution structure of human growth hormone releasing factor. Combined use of circular dichroism and nuclear magnetic resonance spectroscopy.</title>
        <authorList>
            <person name="Clore G.M."/>
            <person name="Martin S.R."/>
            <person name="Gronenborn A.M."/>
        </authorList>
    </citation>
    <scope>STRUCTURE BY NMR OF 32-60</scope>
</reference>
<reference evidence="8" key="11">
    <citation type="journal article" date="2015" name="Sci. Rep.">
        <title>Structural analysis of Clostridium botulinum neurotoxin type D as a platform for the development of targeted secretion inhibitors.</title>
        <authorList>
            <person name="Masuyer G."/>
            <person name="Davies J.R."/>
            <person name="Moore K."/>
            <person name="Chaddock J.A."/>
            <person name="Ravi Acharya K."/>
        </authorList>
    </citation>
    <scope>X-RAY CRYSTALLOGRAPHY (3.10 ANGSTROMS) OF 32-73</scope>
    <scope>BIOTECHNOLOGY</scope>
</reference>
<proteinExistence type="evidence at protein level"/>
<feature type="signal peptide" evidence="1">
    <location>
        <begin position="1"/>
        <end position="20"/>
    </location>
</feature>
<feature type="propeptide" id="PRO_0000011438" evidence="3">
    <location>
        <begin position="21"/>
        <end position="31"/>
    </location>
</feature>
<feature type="peptide" id="PRO_0000011439" description="Somatoliberin">
    <location>
        <begin position="32"/>
        <end position="75"/>
    </location>
</feature>
<feature type="propeptide" id="PRO_0000011440">
    <location>
        <begin position="78"/>
        <end position="108"/>
    </location>
</feature>
<feature type="modified residue" description="Leucine amide" evidence="3">
    <location>
        <position position="75"/>
    </location>
</feature>
<feature type="splice variant" id="VSP_023146" description="In isoform 2." evidence="4 5">
    <location>
        <position position="103"/>
    </location>
</feature>
<feature type="sequence variant" id="VAR_049185" description="In dbSNP:rs17787698.">
    <original>Y</original>
    <variation>C</variation>
    <location>
        <position position="32"/>
    </location>
</feature>
<feature type="sequence variant" id="VAR_024328" description="In dbSNP:rs4988492.">
    <original>L</original>
    <variation>F</variation>
    <location>
        <position position="75"/>
    </location>
</feature>
<feature type="sequence conflict" description="In Ref. 5; CAA24955." evidence="6" ref="5">
    <original>E</original>
    <variation>D</variation>
    <location>
        <position position="92"/>
    </location>
</feature>
<feature type="helix" evidence="9">
    <location>
        <begin position="34"/>
        <end position="58"/>
    </location>
</feature>
<sequence>MPLWVFFFVILTLSNSSHCSPPPPLTLRMRRYADAIFTNSYRKVLGQLSARKLLQDIMSRQQGESNQERGARARLGRQVDSMWAEQKQMELESILVALLQKHSRNSQG</sequence>
<comment type="function">
    <text>GRF is released by the hypothalamus and acts on the adenohypophyse to stimulate the secretion of growth hormone.</text>
</comment>
<comment type="subcellular location">
    <subcellularLocation>
        <location>Secreted</location>
    </subcellularLocation>
</comment>
<comment type="alternative products">
    <event type="alternative splicing"/>
    <isoform>
        <id>P01286-1</id>
        <name>1</name>
        <sequence type="displayed"/>
    </isoform>
    <isoform>
        <id>P01286-2</id>
        <name>2</name>
        <sequence type="described" ref="VSP_023146"/>
    </isoform>
</comment>
<comment type="biotechnology">
    <text evidence="2 7">Can be used for targeted secretion inhibition. A construct with this protein's ligand domain inserted between the C.botulinum neurotoxin type D (BoNT/D, botD) light chain and translocation domains, when injected into rats, leads to decreased growth hormone production. The GHRH ligand domain binds to the GHRH receptor on somatotrophs where it is taken up into endosomes. There the translocation domain inserts into the membrane, releasing the light chain which cleaves synaptobrevin and inhibits growth hormone exocytosis (PubMed:24029240, PubMed:26324071).</text>
</comment>
<comment type="pharmaceutical">
    <text>Available under the names Groliberin (Pharmacia) or Somatrel (Ferring). Also available under the name Geref (Serono). Geref is a synthetic acetylated form of residues 1 to 29 of GHRH. Used for the treatment of growth hormone deficiency.</text>
</comment>
<comment type="similarity">
    <text evidence="6">Belongs to the glucagon family.</text>
</comment>
<comment type="online information" name="Wikipedia">
    <link uri="https://en.wikipedia.org/wiki/Growth_hormone_releasing_hormone"/>
    <text>Growth hormone releasing hormone entry</text>
</comment>
<name>SLIB_HUMAN</name>
<protein>
    <recommendedName>
        <fullName>Somatoliberin</fullName>
    </recommendedName>
    <alternativeName>
        <fullName>Growth hormone-releasing factor</fullName>
        <shortName>GRF</shortName>
    </alternativeName>
    <alternativeName>
        <fullName>Growth hormone-releasing hormone</fullName>
        <shortName>GHRH</shortName>
    </alternativeName>
    <alternativeName>
        <fullName>Somatocrinin</fullName>
    </alternativeName>
    <alternativeName>
        <fullName>Somatorelin</fullName>
    </alternativeName>
    <innName>Sermorelin</innName>
</protein>
<dbReference type="EMBL" id="L29177">
    <property type="status" value="NOT_ANNOTATED_CDS"/>
    <property type="molecule type" value="Genomic_DNA"/>
</dbReference>
<dbReference type="EMBL" id="L00137">
    <property type="protein sequence ID" value="AAA52608.1"/>
    <property type="molecule type" value="Genomic_DNA"/>
</dbReference>
<dbReference type="EMBL" id="L00134">
    <property type="protein sequence ID" value="AAA52608.1"/>
    <property type="status" value="JOINED"/>
    <property type="molecule type" value="Genomic_DNA"/>
</dbReference>
<dbReference type="EMBL" id="L00135">
    <property type="protein sequence ID" value="AAA52608.1"/>
    <property type="status" value="JOINED"/>
    <property type="molecule type" value="Genomic_DNA"/>
</dbReference>
<dbReference type="EMBL" id="L00136">
    <property type="protein sequence ID" value="AAA52608.1"/>
    <property type="status" value="JOINED"/>
    <property type="molecule type" value="Genomic_DNA"/>
</dbReference>
<dbReference type="EMBL" id="L00137">
    <property type="protein sequence ID" value="AAA52609.1"/>
    <property type="molecule type" value="Genomic_DNA"/>
</dbReference>
<dbReference type="EMBL" id="L00134">
    <property type="protein sequence ID" value="AAA52609.1"/>
    <property type="status" value="JOINED"/>
    <property type="molecule type" value="Genomic_DNA"/>
</dbReference>
<dbReference type="EMBL" id="L00135">
    <property type="protein sequence ID" value="AAA52609.1"/>
    <property type="status" value="JOINED"/>
    <property type="molecule type" value="Genomic_DNA"/>
</dbReference>
<dbReference type="EMBL" id="L00136">
    <property type="protein sequence ID" value="AAA52609.1"/>
    <property type="status" value="JOINED"/>
    <property type="molecule type" value="Genomic_DNA"/>
</dbReference>
<dbReference type="EMBL" id="AL031659">
    <property type="status" value="NOT_ANNOTATED_CDS"/>
    <property type="molecule type" value="Genomic_DNA"/>
</dbReference>
<dbReference type="EMBL" id="BC098109">
    <property type="protein sequence ID" value="AAH98109.1"/>
    <property type="molecule type" value="mRNA"/>
</dbReference>
<dbReference type="EMBL" id="BC098161">
    <property type="protein sequence ID" value="AAH98161.1"/>
    <property type="molecule type" value="mRNA"/>
</dbReference>
<dbReference type="EMBL" id="BC099727">
    <property type="protein sequence ID" value="AAH99727.1"/>
    <property type="molecule type" value="mRNA"/>
</dbReference>
<dbReference type="EMBL" id="X00094">
    <property type="protein sequence ID" value="CAA24955.1"/>
    <property type="molecule type" value="mRNA"/>
</dbReference>
<dbReference type="EMBL" id="X00094">
    <property type="protein sequence ID" value="CAA24956.1"/>
    <property type="molecule type" value="mRNA"/>
</dbReference>
<dbReference type="CCDS" id="CCDS13292.1">
    <molecule id="P01286-1"/>
</dbReference>
<dbReference type="CCDS" id="CCDS54460.1">
    <molecule id="P01286-2"/>
</dbReference>
<dbReference type="PIR" id="A21902">
    <property type="entry name" value="RHHUS"/>
</dbReference>
<dbReference type="RefSeq" id="NP_001171660.1">
    <molecule id="P01286-2"/>
    <property type="nucleotide sequence ID" value="NM_001184731.3"/>
</dbReference>
<dbReference type="RefSeq" id="NP_066567.1">
    <molecule id="P01286-1"/>
    <property type="nucleotide sequence ID" value="NM_021081.6"/>
</dbReference>
<dbReference type="RefSeq" id="XP_011527086.1">
    <property type="nucleotide sequence ID" value="XM_011528784.2"/>
</dbReference>
<dbReference type="RefSeq" id="XP_011527090.1">
    <property type="nucleotide sequence ID" value="XM_011528788.2"/>
</dbReference>
<dbReference type="PDB" id="5BQM">
    <property type="method" value="X-ray"/>
    <property type="resolution" value="3.10 A"/>
    <property type="chains" value="B/D=34-73"/>
</dbReference>
<dbReference type="PDB" id="7CZ5">
    <property type="method" value="EM"/>
    <property type="resolution" value="2.60 A"/>
    <property type="chains" value="P=32-75"/>
</dbReference>
<dbReference type="PDB" id="7V9M">
    <property type="method" value="EM"/>
    <property type="resolution" value="3.29 A"/>
    <property type="chains" value="P=32-75"/>
</dbReference>
<dbReference type="PDBsum" id="5BQM"/>
<dbReference type="PDBsum" id="7CZ5"/>
<dbReference type="PDBsum" id="7V9M"/>
<dbReference type="BMRB" id="P01286"/>
<dbReference type="EMDB" id="EMD-30505"/>
<dbReference type="EMDB" id="EMD-31825"/>
<dbReference type="SMR" id="P01286"/>
<dbReference type="BioGRID" id="108958">
    <property type="interactions" value="5"/>
</dbReference>
<dbReference type="CORUM" id="P01286"/>
<dbReference type="FunCoup" id="P01286">
    <property type="interactions" value="377"/>
</dbReference>
<dbReference type="IntAct" id="P01286">
    <property type="interactions" value="3"/>
</dbReference>
<dbReference type="MINT" id="P01286"/>
<dbReference type="STRING" id="9606.ENSP00000362716"/>
<dbReference type="BioMuta" id="GHRH"/>
<dbReference type="DMDM" id="134521"/>
<dbReference type="MassIVE" id="P01286"/>
<dbReference type="PaxDb" id="9606-ENSP00000362716"/>
<dbReference type="PeptideAtlas" id="P01286"/>
<dbReference type="Antibodypedia" id="11938">
    <property type="antibodies" value="283 antibodies from 27 providers"/>
</dbReference>
<dbReference type="DNASU" id="2691"/>
<dbReference type="Ensembl" id="ENST00000237527.8">
    <molecule id="P01286-2"/>
    <property type="protein sequence ID" value="ENSP00000237527.4"/>
    <property type="gene ID" value="ENSG00000118702.11"/>
</dbReference>
<dbReference type="Ensembl" id="ENST00000373614.7">
    <molecule id="P01286-1"/>
    <property type="protein sequence ID" value="ENSP00000362716.2"/>
    <property type="gene ID" value="ENSG00000118702.11"/>
</dbReference>
<dbReference type="Ensembl" id="ENST00000709405.1">
    <molecule id="P01286-1"/>
    <property type="protein sequence ID" value="ENSP00000517673.1"/>
    <property type="gene ID" value="ENSG00000291972.1"/>
</dbReference>
<dbReference type="Ensembl" id="ENST00000709406.1">
    <molecule id="P01286-2"/>
    <property type="protein sequence ID" value="ENSP00000517674.1"/>
    <property type="gene ID" value="ENSG00000291972.1"/>
</dbReference>
<dbReference type="GeneID" id="2691"/>
<dbReference type="KEGG" id="hsa:2691"/>
<dbReference type="MANE-Select" id="ENST00000373614.7">
    <property type="protein sequence ID" value="ENSP00000362716.2"/>
    <property type="RefSeq nucleotide sequence ID" value="NM_021081.6"/>
    <property type="RefSeq protein sequence ID" value="NP_066567.1"/>
</dbReference>
<dbReference type="UCSC" id="uc002xgr.5">
    <molecule id="P01286-1"/>
    <property type="organism name" value="human"/>
</dbReference>
<dbReference type="AGR" id="HGNC:4265"/>
<dbReference type="CTD" id="2691"/>
<dbReference type="DisGeNET" id="2691"/>
<dbReference type="GeneCards" id="GHRH"/>
<dbReference type="HGNC" id="HGNC:4265">
    <property type="gene designation" value="GHRH"/>
</dbReference>
<dbReference type="HPA" id="ENSG00000118702">
    <property type="expression patterns" value="Tissue enriched (brain)"/>
</dbReference>
<dbReference type="MIM" id="139190">
    <property type="type" value="gene"/>
</dbReference>
<dbReference type="neXtProt" id="NX_P01286"/>
<dbReference type="OpenTargets" id="ENSG00000118702"/>
<dbReference type="PharmGKB" id="PA28675"/>
<dbReference type="VEuPathDB" id="HostDB:ENSG00000118702"/>
<dbReference type="eggNOG" id="ENOG502S2N6">
    <property type="taxonomic scope" value="Eukaryota"/>
</dbReference>
<dbReference type="GeneTree" id="ENSGT00950000183154"/>
<dbReference type="HOGENOM" id="CLU_174932_0_0_1"/>
<dbReference type="InParanoid" id="P01286"/>
<dbReference type="OMA" id="DSVWTDQ"/>
<dbReference type="OrthoDB" id="9931004at2759"/>
<dbReference type="PAN-GO" id="P01286">
    <property type="GO annotations" value="12 GO annotations based on evolutionary models"/>
</dbReference>
<dbReference type="PhylomeDB" id="P01286"/>
<dbReference type="TreeFam" id="TF353187"/>
<dbReference type="PathwayCommons" id="P01286"/>
<dbReference type="Reactome" id="R-HSA-418555">
    <property type="pathway name" value="G alpha (s) signalling events"/>
</dbReference>
<dbReference type="Reactome" id="R-HSA-420092">
    <property type="pathway name" value="Glucagon-type ligand receptors"/>
</dbReference>
<dbReference type="SignaLink" id="P01286"/>
<dbReference type="BioGRID-ORCS" id="2691">
    <property type="hits" value="11 hits in 1147 CRISPR screens"/>
</dbReference>
<dbReference type="GenomeRNAi" id="2691"/>
<dbReference type="Pharos" id="P01286">
    <property type="development level" value="Tbio"/>
</dbReference>
<dbReference type="PRO" id="PR:P01286"/>
<dbReference type="Proteomes" id="UP000005640">
    <property type="component" value="Chromosome 20"/>
</dbReference>
<dbReference type="RNAct" id="P01286">
    <property type="molecule type" value="protein"/>
</dbReference>
<dbReference type="Bgee" id="ENSG00000118702">
    <property type="expression patterns" value="Expressed in primordial germ cell in gonad and 76 other cell types or tissues"/>
</dbReference>
<dbReference type="GO" id="GO:0005576">
    <property type="term" value="C:extracellular region"/>
    <property type="evidence" value="ECO:0000304"/>
    <property type="project" value="Reactome"/>
</dbReference>
<dbReference type="GO" id="GO:0005615">
    <property type="term" value="C:extracellular space"/>
    <property type="evidence" value="ECO:0000250"/>
    <property type="project" value="BHF-UCL"/>
</dbReference>
<dbReference type="GO" id="GO:0043204">
    <property type="term" value="C:perikaryon"/>
    <property type="evidence" value="ECO:0000318"/>
    <property type="project" value="GO_Central"/>
</dbReference>
<dbReference type="GO" id="GO:0043195">
    <property type="term" value="C:terminal bouton"/>
    <property type="evidence" value="ECO:0000250"/>
    <property type="project" value="BHF-UCL"/>
</dbReference>
<dbReference type="GO" id="GO:0016608">
    <property type="term" value="F:growth hormone-releasing hormone activity"/>
    <property type="evidence" value="ECO:0000314"/>
    <property type="project" value="BHF-UCL"/>
</dbReference>
<dbReference type="GO" id="GO:0031770">
    <property type="term" value="F:growth hormone-releasing hormone receptor binding"/>
    <property type="evidence" value="ECO:0000353"/>
    <property type="project" value="BHF-UCL"/>
</dbReference>
<dbReference type="GO" id="GO:0005184">
    <property type="term" value="F:neuropeptide hormone activity"/>
    <property type="evidence" value="ECO:0000318"/>
    <property type="project" value="GO_Central"/>
</dbReference>
<dbReference type="GO" id="GO:0051428">
    <property type="term" value="F:peptide hormone receptor binding"/>
    <property type="evidence" value="ECO:0000318"/>
    <property type="project" value="GO_Central"/>
</dbReference>
<dbReference type="GO" id="GO:0021984">
    <property type="term" value="P:adenohypophysis development"/>
    <property type="evidence" value="ECO:0000250"/>
    <property type="project" value="BHF-UCL"/>
</dbReference>
<dbReference type="GO" id="GO:0007189">
    <property type="term" value="P:adenylate cyclase-activating G protein-coupled receptor signaling pathway"/>
    <property type="evidence" value="ECO:0000314"/>
    <property type="project" value="BHF-UCL"/>
</dbReference>
<dbReference type="GO" id="GO:0007267">
    <property type="term" value="P:cell-cell signaling"/>
    <property type="evidence" value="ECO:0000304"/>
    <property type="project" value="ProtInc"/>
</dbReference>
<dbReference type="GO" id="GO:0030252">
    <property type="term" value="P:growth hormone secretion"/>
    <property type="evidence" value="ECO:0000314"/>
    <property type="project" value="MGI"/>
</dbReference>
<dbReference type="GO" id="GO:0035264">
    <property type="term" value="P:multicellular organism growth"/>
    <property type="evidence" value="ECO:0000315"/>
    <property type="project" value="BHF-UCL"/>
</dbReference>
<dbReference type="GO" id="GO:0008284">
    <property type="term" value="P:positive regulation of cell population proliferation"/>
    <property type="evidence" value="ECO:0000314"/>
    <property type="project" value="BHF-UCL"/>
</dbReference>
<dbReference type="GO" id="GO:0046005">
    <property type="term" value="P:positive regulation of circadian sleep/wake cycle, REM sleep"/>
    <property type="evidence" value="ECO:0000303"/>
    <property type="project" value="BHF-UCL"/>
</dbReference>
<dbReference type="GO" id="GO:0060124">
    <property type="term" value="P:positive regulation of growth hormone secretion"/>
    <property type="evidence" value="ECO:0000314"/>
    <property type="project" value="BHF-UCL"/>
</dbReference>
<dbReference type="GO" id="GO:0043568">
    <property type="term" value="P:positive regulation of insulin-like growth factor receptor signaling pathway"/>
    <property type="evidence" value="ECO:0000303"/>
    <property type="project" value="BHF-UCL"/>
</dbReference>
<dbReference type="GO" id="GO:0040018">
    <property type="term" value="P:positive regulation of multicellular organism growth"/>
    <property type="evidence" value="ECO:0000315"/>
    <property type="project" value="MGI"/>
</dbReference>
<dbReference type="GO" id="GO:0032880">
    <property type="term" value="P:regulation of protein localization"/>
    <property type="evidence" value="ECO:0000318"/>
    <property type="project" value="GO_Central"/>
</dbReference>
<dbReference type="GO" id="GO:0032094">
    <property type="term" value="P:response to food"/>
    <property type="evidence" value="ECO:0000250"/>
    <property type="project" value="BHF-UCL"/>
</dbReference>
<dbReference type="InterPro" id="IPR000532">
    <property type="entry name" value="Glucagon_GIP_secretin_VIP"/>
</dbReference>
<dbReference type="InterPro" id="IPR046963">
    <property type="entry name" value="VIP/GHRH-like"/>
</dbReference>
<dbReference type="PANTHER" id="PTHR11213">
    <property type="entry name" value="GLUCAGON-FAMILY NEUROPEPTIDE"/>
    <property type="match status" value="1"/>
</dbReference>
<dbReference type="PANTHER" id="PTHR11213:SF6">
    <property type="entry name" value="SOMATOLIBERIN"/>
    <property type="match status" value="1"/>
</dbReference>
<dbReference type="Pfam" id="PF00123">
    <property type="entry name" value="Hormone_2"/>
    <property type="match status" value="1"/>
</dbReference>
<dbReference type="SMART" id="SM00070">
    <property type="entry name" value="GLUCA"/>
    <property type="match status" value="1"/>
</dbReference>
<dbReference type="PROSITE" id="PS00260">
    <property type="entry name" value="GLUCAGON"/>
    <property type="match status" value="1"/>
</dbReference>
<evidence type="ECO:0000255" key="1"/>
<evidence type="ECO:0000269" key="2">
    <source>
    </source>
</evidence>
<evidence type="ECO:0000269" key="3">
    <source>
    </source>
</evidence>
<evidence type="ECO:0000303" key="4">
    <source>
    </source>
</evidence>
<evidence type="ECO:0000303" key="5">
    <source>
    </source>
</evidence>
<evidence type="ECO:0000305" key="6"/>
<evidence type="ECO:0000305" key="7">
    <source>
    </source>
</evidence>
<evidence type="ECO:0007744" key="8">
    <source>
        <dbReference type="PDB" id="5BQM"/>
    </source>
</evidence>
<evidence type="ECO:0007829" key="9">
    <source>
        <dbReference type="PDB" id="7CZ5"/>
    </source>
</evidence>